<protein>
    <recommendedName>
        <fullName>Uncharacterized protein C16</fullName>
    </recommendedName>
</protein>
<gene>
    <name type="ORF">C16L</name>
</gene>
<organism>
    <name type="scientific">Swinepox virus (strain Kasza)</name>
    <name type="common">SWPV</name>
    <dbReference type="NCBI Taxonomy" id="10277"/>
    <lineage>
        <taxon>Viruses</taxon>
        <taxon>Varidnaviria</taxon>
        <taxon>Bamfordvirae</taxon>
        <taxon>Nucleocytoviricota</taxon>
        <taxon>Pokkesviricetes</taxon>
        <taxon>Chitovirales</taxon>
        <taxon>Poxviridae</taxon>
        <taxon>Chordopoxvirinae</taxon>
        <taxon>Suipoxvirus</taxon>
        <taxon>Swinepox virus</taxon>
    </lineage>
</organism>
<sequence length="73" mass="8920">MNNRKYSINNGFMSYLRKKFTTFLRKKSTYRIKSNTDYYQENEKLIHKNNIKIPYKVKVIRKRCSSSDDDVFI</sequence>
<organismHost>
    <name type="scientific">Sus scrofa</name>
    <name type="common">Pig</name>
    <dbReference type="NCBI Taxonomy" id="9823"/>
</organismHost>
<reference key="1">
    <citation type="journal article" date="1993" name="Virology">
        <title>DNA sequence analysis of conserved and unique regions of swinepox virus: identification of genetic elements supporting phenotypic observations including a novel G protein-coupled receptor homologue.</title>
        <authorList>
            <person name="Massung R.F."/>
            <person name="Jayarama V."/>
            <person name="Moyer R.W."/>
        </authorList>
    </citation>
    <scope>NUCLEOTIDE SEQUENCE [GENOMIC DNA]</scope>
</reference>
<name>VC16_SWPVK</name>
<accession>P32219</accession>
<proteinExistence type="predicted"/>
<dbReference type="EMBL" id="L22013">
    <property type="protein sequence ID" value="AAC37855.1"/>
    <property type="molecule type" value="Genomic_DNA"/>
</dbReference>
<dbReference type="KEGG" id="vg:932402"/>
<feature type="chain" id="PRO_0000099756" description="Uncharacterized protein C16">
    <location>
        <begin position="1"/>
        <end position="73"/>
    </location>
</feature>